<keyword id="KW-0002">3D-structure</keyword>
<keyword id="KW-0067">ATP-binding</keyword>
<keyword id="KW-1003">Cell membrane</keyword>
<keyword id="KW-0963">Cytoplasm</keyword>
<keyword id="KW-0903">Direct protein sequencing</keyword>
<keyword id="KW-0325">Glycoprotein</keyword>
<keyword id="KW-0472">Membrane</keyword>
<keyword id="KW-0547">Nucleotide-binding</keyword>
<keyword id="KW-0597">Phosphoprotein</keyword>
<keyword id="KW-1185">Reference proteome</keyword>
<keyword id="KW-0677">Repeat</keyword>
<keyword id="KW-1278">Translocase</keyword>
<keyword id="KW-0812">Transmembrane</keyword>
<keyword id="KW-1133">Transmembrane helix</keyword>
<keyword id="KW-0813">Transport</keyword>
<reference key="1">
    <citation type="journal article" date="1990" name="Mol. Cell. Biol.">
        <title>Two members of the mouse mdr gene family confer multidrug resistance with overlapping but distinct drug specificities.</title>
        <authorList>
            <person name="Devault A."/>
            <person name="Gros P."/>
        </authorList>
    </citation>
    <scope>NUCLEOTIDE SEQUENCE [MRNA]</scope>
    <scope>FUNCTION</scope>
</reference>
<reference key="2">
    <citation type="journal article" date="1990" name="Mol. Cell. Biol.">
        <title>Structural analysis of the mouse mdr1a (P-glycoprotein) promoter reveals the basis for differential transcript heterogeneity in multidrug-resistant J774.2 cells.</title>
        <authorList>
            <person name="Hsu S.I.H."/>
            <person name="Cohen D."/>
            <person name="Kirschner L.S."/>
            <person name="Lothstein L."/>
            <person name="Hartstein M."/>
            <person name="Horwitz S.B."/>
        </authorList>
    </citation>
    <scope>NUCLEOTIDE SEQUENCE [GENOMIC DNA / MRNA]</scope>
</reference>
<reference key="3">
    <citation type="submission" date="2004-12" db="EMBL/GenBank/DDBJ databases">
        <title>Heterologus expression of mouse mdr1a (Abcb1a), (P-glycoprotein), using the insect cell baculovirus expression system.</title>
        <authorList>
            <person name="Pimprale S.S."/>
            <person name="Xiao G."/>
            <person name="Patten C."/>
            <person name="Crespi C."/>
        </authorList>
    </citation>
    <scope>NUCLEOTIDE SEQUENCE [MRNA]</scope>
    <source>
        <strain>BALB/cJ</strain>
    </source>
</reference>
<reference key="4">
    <citation type="submission" date="2005-07" db="EMBL/GenBank/DDBJ databases">
        <authorList>
            <person name="Mural R.J."/>
            <person name="Adams M.D."/>
            <person name="Myers E.W."/>
            <person name="Smith H.O."/>
            <person name="Venter J.C."/>
        </authorList>
    </citation>
    <scope>NUCLEOTIDE SEQUENCE [LARGE SCALE GENOMIC DNA]</scope>
</reference>
<reference key="5">
    <citation type="journal article" date="1989" name="J. Biol. Chem.">
        <title>Differential overexpression of three mdr gene family members in multidrug-resistant J774.2 mouse cells. Evidence that distinct P-glycoprotein precursors are encoded by unique mdr genes.</title>
        <authorList>
            <person name="Hsu S.I.H."/>
            <person name="Lothstein L."/>
            <person name="Horwitz S.B."/>
        </authorList>
    </citation>
    <scope>NUCLEOTIDE SEQUENCE [MRNA] OF 173-1276</scope>
    <source>
        <strain>BALB/cJ</strain>
    </source>
</reference>
<reference key="6">
    <citation type="submission" date="2009-01" db="UniProtKB">
        <authorList>
            <person name="Lubec G."/>
            <person name="Sunyer B."/>
            <person name="Chen W.-Q."/>
        </authorList>
    </citation>
    <scope>PROTEIN SEQUENCE OF 273-282</scope>
    <scope>IDENTIFICATION BY MASS SPECTROMETRY</scope>
    <source>
        <strain>OF1</strain>
        <tissue>Hippocampus</tissue>
    </source>
</reference>
<reference key="7">
    <citation type="journal article" date="1996" name="Cell">
        <title>MDR1 P-glycoprotein is a lipid translocase of broad specificity, while MDR3 P-glycoprotein specifically translocates phosphatidylcholine.</title>
        <authorList>
            <person name="van Helvoort A."/>
            <person name="Smith A.J."/>
            <person name="Sprong H."/>
            <person name="Fritzsche I."/>
            <person name="Schinkel A.H."/>
            <person name="Borst P."/>
            <person name="van Meer G."/>
        </authorList>
    </citation>
    <scope>SUBCELLULAR LOCATION</scope>
    <scope>CATALYTIC ACTIVITY</scope>
    <scope>FUNCTION</scope>
</reference>
<reference key="8">
    <citation type="journal article" date="2010" name="Cell">
        <title>A tissue-specific atlas of mouse protein phosphorylation and expression.</title>
        <authorList>
            <person name="Huttlin E.L."/>
            <person name="Jedrychowski M.P."/>
            <person name="Elias J.E."/>
            <person name="Goswami T."/>
            <person name="Rad R."/>
            <person name="Beausoleil S.A."/>
            <person name="Villen J."/>
            <person name="Haas W."/>
            <person name="Sowa M.E."/>
            <person name="Gygi S.P."/>
        </authorList>
    </citation>
    <scope>IDENTIFICATION BY MASS SPECTROMETRY [LARGE SCALE ANALYSIS]</scope>
    <source>
        <tissue>Heart</tissue>
        <tissue>Lung</tissue>
    </source>
</reference>
<reference key="9">
    <citation type="journal article" date="2009" name="Science">
        <title>Structure of P-glycoprotein reveals a molecular basis for poly-specific drug binding.</title>
        <authorList>
            <person name="Aller S.G."/>
            <person name="Yu J."/>
            <person name="Ward A."/>
            <person name="Weng Y."/>
            <person name="Chittaboina S."/>
            <person name="Zhuo R."/>
            <person name="Harrell P.M."/>
            <person name="Trinh Y.T."/>
            <person name="Zhang Q."/>
            <person name="Urbatsch I.L."/>
            <person name="Chang G."/>
        </authorList>
    </citation>
    <scope>X-RAY CRYSTALLOGRAPHY (3.8 ANGSTROMS) IN COMPLEXES WITH INHIBITORS</scope>
    <scope>TOPOLOGY</scope>
</reference>
<organism>
    <name type="scientific">Mus musculus</name>
    <name type="common">Mouse</name>
    <dbReference type="NCBI Taxonomy" id="10090"/>
    <lineage>
        <taxon>Eukaryota</taxon>
        <taxon>Metazoa</taxon>
        <taxon>Chordata</taxon>
        <taxon>Craniata</taxon>
        <taxon>Vertebrata</taxon>
        <taxon>Euteleostomi</taxon>
        <taxon>Mammalia</taxon>
        <taxon>Eutheria</taxon>
        <taxon>Euarchontoglires</taxon>
        <taxon>Glires</taxon>
        <taxon>Rodentia</taxon>
        <taxon>Myomorpha</taxon>
        <taxon>Muroidea</taxon>
        <taxon>Muridae</taxon>
        <taxon>Murinae</taxon>
        <taxon>Mus</taxon>
        <taxon>Mus</taxon>
    </lineage>
</organism>
<evidence type="ECO:0000250" key="1"/>
<evidence type="ECO:0000250" key="2">
    <source>
        <dbReference type="UniProtKB" id="P06795"/>
    </source>
</evidence>
<evidence type="ECO:0000250" key="3">
    <source>
        <dbReference type="UniProtKB" id="P08183"/>
    </source>
</evidence>
<evidence type="ECO:0000255" key="4"/>
<evidence type="ECO:0000255" key="5">
    <source>
        <dbReference type="PROSITE-ProRule" id="PRU00434"/>
    </source>
</evidence>
<evidence type="ECO:0000255" key="6">
    <source>
        <dbReference type="PROSITE-ProRule" id="PRU00441"/>
    </source>
</evidence>
<evidence type="ECO:0000256" key="7">
    <source>
        <dbReference type="SAM" id="MobiDB-lite"/>
    </source>
</evidence>
<evidence type="ECO:0000269" key="8">
    <source>
    </source>
</evidence>
<evidence type="ECO:0000305" key="9"/>
<evidence type="ECO:0000312" key="10">
    <source>
        <dbReference type="MGI" id="MGI:97570"/>
    </source>
</evidence>
<evidence type="ECO:0007829" key="11">
    <source>
        <dbReference type="PDB" id="4Q9H"/>
    </source>
</evidence>
<evidence type="ECO:0007829" key="12">
    <source>
        <dbReference type="PDB" id="5KO2"/>
    </source>
</evidence>
<evidence type="ECO:0007829" key="13">
    <source>
        <dbReference type="PDB" id="7ZK4"/>
    </source>
</evidence>
<evidence type="ECO:0007829" key="14">
    <source>
        <dbReference type="PDB" id="7ZK5"/>
    </source>
</evidence>
<evidence type="ECO:0007829" key="15">
    <source>
        <dbReference type="PDB" id="7ZK6"/>
    </source>
</evidence>
<evidence type="ECO:0007829" key="16">
    <source>
        <dbReference type="PDB" id="7ZK8"/>
    </source>
</evidence>
<evidence type="ECO:0007829" key="17">
    <source>
        <dbReference type="PDB" id="7ZKA"/>
    </source>
</evidence>
<evidence type="ECO:0007829" key="18">
    <source>
        <dbReference type="PDB" id="8AVY"/>
    </source>
</evidence>
<name>MDR1A_MOUSE</name>
<gene>
    <name evidence="10" type="primary">Abcb1a</name>
    <name type="synonym">Abcb4</name>
    <name type="synonym">Mdr1a</name>
    <name type="synonym">Mdr3</name>
    <name type="synonym">Pgy-3</name>
    <name type="synonym">Pgy3</name>
</gene>
<sequence length="1276" mass="140647">MELEEDLKGRADKNFSKMGKKSKKEKKEKKPAVSVLTMFRYAGWLDRLYMLVGTLAAIIHGVALPLMMLIFGDMTDSFASVGNVSKNSTNMSEADKRAMFAKLEEEMTTYAYYYTGIGAGVLIVAYIQVSFWCLAAGRQIHKIRQKFFHAIMNQEIGWFDVHDVGELNTRLTDDVSKINEGIGDKIGMFFQAMATFFGGFIIGFTRGWKLTLVILAISPVLGLSAGIWAKILSSFTDKELHAYAKAGAVAEEVLAAIRTVIAFGGQKKELERYNNNLEEAKRLGIKKAITANISMGAAFLLIYASYALAFWYGTSLVISKEYSIGQVLTVFFSVLIGAFSVGQASPNIEAFANARGAAYEVFKIIDNKPSIDSFSKSGHKPDNIQGNLEFKNIHFSYPSRKEVQILKGLNLKVKSGQTVALVGNSGCGKSTTVQLMQRLYDPLDGMVSIDGQDIRTINVRYLREIIGVVSQEPVLFATTIAENIRYGREDVTMDEIEKAVKEANAYDFIMKLPHQFDTLVGERGAQLSGGQKQRIAIARALVRNPKILLLDEATSALDTESEAVVQAALDKAREGRTTIVIAHRLSTVRNADVIAGFDGGVIVEQGNHDELMREKGIYFKLVMTQTAGNEIELGNEACKSKDEIDNLDMSSKDSGSSLIRRRSTRKSICGPHDQDRKLSTKEALDEDVPPASFWRILKLNSTEWPYFVVGIFCAIINGGLQPAFSVIFSKVVGVFTNGGPPETQRQNSNLFSLLFLILGIISFITFFLQGFTFGKAGEILTKRLRYMVFKSMLRQDVSWFDDPKNTTGALTTRLANDAAQVKGATGSRLAVIFQNIANLGTGIIISLIYGWQLTLLLLAIVPIIAIAGVVEMKMLSGQALKDKKELEGSGKIATEAIENFRTVVSLTREQKFETMYAQSLQIPYRNAMKKAHVFGITFSFTQAMMYFSYAACFRFGAYLVTQQLMTFENVLLVFSAIVFGAMAVGQVSSFAPDYAKATVSASHIIRIIEKTPEIDSYSTQGLKPNMLEGNVQFSGVVFNYPTRPSIPVLQGLSLEVKKGQTLALVGSSGCGKSTVVQLLERFYDPMAGSVFLDGKEIKQLNVQWLRAQLGIVSQEPILFDCSIAENIAYGDNSRVVSYEEIVRAAKEANIHQFIDSLPDKYNTRVGDKGTQLSGGQKQRIAIARALVRQPHILLLDEATSALDTESEKVVQEALDKAREGRTCIVIAHRLSTIQNADLIVVIQNGKVKEHGTHQQLLAQKGIYFSMVSVQAGAKRS</sequence>
<dbReference type="EC" id="7.6.2.2" evidence="3"/>
<dbReference type="EC" id="7.6.2.1" evidence="3"/>
<dbReference type="EMBL" id="M30697">
    <property type="protein sequence ID" value="AAA39517.1"/>
    <property type="molecule type" value="mRNA"/>
</dbReference>
<dbReference type="EMBL" id="M33581">
    <property type="protein sequence ID" value="AAA39514.1"/>
    <property type="molecule type" value="mRNA"/>
</dbReference>
<dbReference type="EMBL" id="M33580">
    <property type="protein sequence ID" value="AAA39518.1"/>
    <property type="molecule type" value="Genomic_DNA"/>
</dbReference>
<dbReference type="EMBL" id="AY864315">
    <property type="protein sequence ID" value="AAW56448.1"/>
    <property type="molecule type" value="mRNA"/>
</dbReference>
<dbReference type="EMBL" id="CH466600">
    <property type="protein sequence ID" value="EDL14677.1"/>
    <property type="molecule type" value="Genomic_DNA"/>
</dbReference>
<dbReference type="EMBL" id="M24417">
    <property type="protein sequence ID" value="AAA03243.1"/>
    <property type="molecule type" value="mRNA"/>
</dbReference>
<dbReference type="CCDS" id="CCDS19084.1"/>
<dbReference type="PIR" id="A34175">
    <property type="entry name" value="DVMS1A"/>
</dbReference>
<dbReference type="PIR" id="A34786">
    <property type="entry name" value="A34786"/>
</dbReference>
<dbReference type="RefSeq" id="NP_035206.2">
    <property type="nucleotide sequence ID" value="NM_011076.3"/>
</dbReference>
<dbReference type="RefSeq" id="XP_006503618.1">
    <property type="nucleotide sequence ID" value="XM_006503555.3"/>
</dbReference>
<dbReference type="RefSeq" id="XP_006503619.1">
    <property type="nucleotide sequence ID" value="XM_006503556.3"/>
</dbReference>
<dbReference type="PDB" id="3G5U">
    <property type="method" value="X-ray"/>
    <property type="resolution" value="3.80 A"/>
    <property type="chains" value="A/B=1-1276"/>
</dbReference>
<dbReference type="PDB" id="3G60">
    <property type="method" value="X-ray"/>
    <property type="resolution" value="4.40 A"/>
    <property type="chains" value="A/B=1-1276"/>
</dbReference>
<dbReference type="PDB" id="3G61">
    <property type="method" value="X-ray"/>
    <property type="resolution" value="4.35 A"/>
    <property type="chains" value="A/B=1-1276"/>
</dbReference>
<dbReference type="PDB" id="4KSB">
    <property type="method" value="X-ray"/>
    <property type="resolution" value="3.80 A"/>
    <property type="chains" value="A=1-1276"/>
</dbReference>
<dbReference type="PDB" id="4KSC">
    <property type="method" value="X-ray"/>
    <property type="resolution" value="4.00 A"/>
    <property type="chains" value="A=1-1276"/>
</dbReference>
<dbReference type="PDB" id="4KSD">
    <property type="method" value="X-ray"/>
    <property type="resolution" value="4.10 A"/>
    <property type="chains" value="A=1-1276"/>
</dbReference>
<dbReference type="PDB" id="4LSG">
    <property type="method" value="X-ray"/>
    <property type="resolution" value="3.80 A"/>
    <property type="chains" value="A/B=1-1276"/>
</dbReference>
<dbReference type="PDB" id="4M1M">
    <property type="method" value="X-ray"/>
    <property type="resolution" value="3.80 A"/>
    <property type="chains" value="A/B=1-1276"/>
</dbReference>
<dbReference type="PDB" id="4M2S">
    <property type="method" value="X-ray"/>
    <property type="resolution" value="4.40 A"/>
    <property type="chains" value="A/B=1-1276"/>
</dbReference>
<dbReference type="PDB" id="4M2T">
    <property type="method" value="X-ray"/>
    <property type="resolution" value="4.35 A"/>
    <property type="chains" value="A/B=1-1276"/>
</dbReference>
<dbReference type="PDB" id="4Q9H">
    <property type="method" value="X-ray"/>
    <property type="resolution" value="3.40 A"/>
    <property type="chains" value="A=1-1276"/>
</dbReference>
<dbReference type="PDB" id="4Q9I">
    <property type="method" value="X-ray"/>
    <property type="resolution" value="3.78 A"/>
    <property type="chains" value="A=1-1276"/>
</dbReference>
<dbReference type="PDB" id="4Q9J">
    <property type="method" value="X-ray"/>
    <property type="resolution" value="3.60 A"/>
    <property type="chains" value="A=1-1276"/>
</dbReference>
<dbReference type="PDB" id="4Q9K">
    <property type="method" value="X-ray"/>
    <property type="resolution" value="3.80 A"/>
    <property type="chains" value="A=1-1276"/>
</dbReference>
<dbReference type="PDB" id="4Q9L">
    <property type="method" value="X-ray"/>
    <property type="resolution" value="3.80 A"/>
    <property type="chains" value="A=1-1276"/>
</dbReference>
<dbReference type="PDB" id="4XWK">
    <property type="method" value="X-ray"/>
    <property type="resolution" value="3.50 A"/>
    <property type="chains" value="A=1-1276"/>
</dbReference>
<dbReference type="PDB" id="5KO2">
    <property type="method" value="X-ray"/>
    <property type="resolution" value="3.30 A"/>
    <property type="chains" value="A/B=1-1276"/>
</dbReference>
<dbReference type="PDB" id="5KOY">
    <property type="method" value="X-ray"/>
    <property type="resolution" value="3.85 A"/>
    <property type="chains" value="A/B=1-1276"/>
</dbReference>
<dbReference type="PDB" id="5KPD">
    <property type="method" value="X-ray"/>
    <property type="resolution" value="3.35 A"/>
    <property type="chains" value="A/B=1-1276"/>
</dbReference>
<dbReference type="PDB" id="5KPI">
    <property type="method" value="X-ray"/>
    <property type="resolution" value="4.01 A"/>
    <property type="chains" value="A/B=1-1276"/>
</dbReference>
<dbReference type="PDB" id="5KPJ">
    <property type="method" value="X-ray"/>
    <property type="resolution" value="3.50 A"/>
    <property type="chains" value="A=1-1276"/>
</dbReference>
<dbReference type="PDB" id="6GDI">
    <property type="method" value="EM"/>
    <property type="resolution" value="7.90 A"/>
    <property type="chains" value="A=1-1276"/>
</dbReference>
<dbReference type="PDB" id="6Q81">
    <property type="method" value="EM"/>
    <property type="resolution" value="7.90 A"/>
    <property type="chains" value="A=1-1276"/>
</dbReference>
<dbReference type="PDB" id="6UJN">
    <property type="method" value="X-ray"/>
    <property type="resolution" value="3.98 A"/>
    <property type="chains" value="A=1-1276"/>
</dbReference>
<dbReference type="PDB" id="6UJP">
    <property type="method" value="X-ray"/>
    <property type="resolution" value="3.98 A"/>
    <property type="chains" value="A=1-1276"/>
</dbReference>
<dbReference type="PDB" id="6UJR">
    <property type="method" value="X-ray"/>
    <property type="resolution" value="4.10 A"/>
    <property type="chains" value="A=1-1276"/>
</dbReference>
<dbReference type="PDB" id="6UJS">
    <property type="method" value="X-ray"/>
    <property type="resolution" value="4.17 A"/>
    <property type="chains" value="A=1-1276"/>
</dbReference>
<dbReference type="PDB" id="6UJT">
    <property type="method" value="X-ray"/>
    <property type="resolution" value="4.17 A"/>
    <property type="chains" value="A=1-1276"/>
</dbReference>
<dbReference type="PDB" id="6UJW">
    <property type="method" value="X-ray"/>
    <property type="resolution" value="4.15 A"/>
    <property type="chains" value="A=1-1276"/>
</dbReference>
<dbReference type="PDB" id="7OTG">
    <property type="method" value="EM"/>
    <property type="resolution" value="5.40 A"/>
    <property type="chains" value="A=1-1276"/>
</dbReference>
<dbReference type="PDB" id="7OTI">
    <property type="method" value="EM"/>
    <property type="resolution" value="4.20 A"/>
    <property type="chains" value="A=1-1276"/>
</dbReference>
<dbReference type="PDB" id="7ZK4">
    <property type="method" value="EM"/>
    <property type="resolution" value="2.60 A"/>
    <property type="chains" value="A=1-1276"/>
</dbReference>
<dbReference type="PDB" id="7ZK5">
    <property type="method" value="EM"/>
    <property type="resolution" value="2.60 A"/>
    <property type="chains" value="A=1-1276"/>
</dbReference>
<dbReference type="PDB" id="7ZK6">
    <property type="method" value="EM"/>
    <property type="resolution" value="3.10 A"/>
    <property type="chains" value="A=1-1276"/>
</dbReference>
<dbReference type="PDB" id="7ZK8">
    <property type="method" value="EM"/>
    <property type="resolution" value="3.00 A"/>
    <property type="chains" value="A=1-1271"/>
</dbReference>
<dbReference type="PDB" id="7ZK9">
    <property type="method" value="EM"/>
    <property type="resolution" value="4.30 A"/>
    <property type="chains" value="A=1-1260"/>
</dbReference>
<dbReference type="PDB" id="7ZKA">
    <property type="method" value="EM"/>
    <property type="resolution" value="2.90 A"/>
    <property type="chains" value="A=1-1276"/>
</dbReference>
<dbReference type="PDB" id="7ZKB">
    <property type="method" value="EM"/>
    <property type="resolution" value="4.70 A"/>
    <property type="chains" value="A=1-1276"/>
</dbReference>
<dbReference type="PDB" id="8AVY">
    <property type="method" value="EM"/>
    <property type="resolution" value="2.90 A"/>
    <property type="chains" value="A=1-1276"/>
</dbReference>
<dbReference type="PDB" id="8PEE">
    <property type="method" value="EM"/>
    <property type="resolution" value="3.80 A"/>
    <property type="chains" value="A=1-1276"/>
</dbReference>
<dbReference type="PDBsum" id="3G5U"/>
<dbReference type="PDBsum" id="3G60"/>
<dbReference type="PDBsum" id="3G61"/>
<dbReference type="PDBsum" id="4KSB"/>
<dbReference type="PDBsum" id="4KSC"/>
<dbReference type="PDBsum" id="4KSD"/>
<dbReference type="PDBsum" id="4LSG"/>
<dbReference type="PDBsum" id="4M1M"/>
<dbReference type="PDBsum" id="4M2S"/>
<dbReference type="PDBsum" id="4M2T"/>
<dbReference type="PDBsum" id="4Q9H"/>
<dbReference type="PDBsum" id="4Q9I"/>
<dbReference type="PDBsum" id="4Q9J"/>
<dbReference type="PDBsum" id="4Q9K"/>
<dbReference type="PDBsum" id="4Q9L"/>
<dbReference type="PDBsum" id="4XWK"/>
<dbReference type="PDBsum" id="5KO2"/>
<dbReference type="PDBsum" id="5KOY"/>
<dbReference type="PDBsum" id="5KPD"/>
<dbReference type="PDBsum" id="5KPI"/>
<dbReference type="PDBsum" id="5KPJ"/>
<dbReference type="PDBsum" id="6GDI"/>
<dbReference type="PDBsum" id="6Q81"/>
<dbReference type="PDBsum" id="6UJN"/>
<dbReference type="PDBsum" id="6UJP"/>
<dbReference type="PDBsum" id="6UJR"/>
<dbReference type="PDBsum" id="6UJS"/>
<dbReference type="PDBsum" id="6UJT"/>
<dbReference type="PDBsum" id="6UJW"/>
<dbReference type="PDBsum" id="7OTG"/>
<dbReference type="PDBsum" id="7OTI"/>
<dbReference type="PDBsum" id="7ZK4"/>
<dbReference type="PDBsum" id="7ZK5"/>
<dbReference type="PDBsum" id="7ZK6"/>
<dbReference type="PDBsum" id="7ZK8"/>
<dbReference type="PDBsum" id="7ZK9"/>
<dbReference type="PDBsum" id="7ZKA"/>
<dbReference type="PDBsum" id="7ZKB"/>
<dbReference type="PDBsum" id="8AVY"/>
<dbReference type="PDBsum" id="8PEE"/>
<dbReference type="EMDB" id="EMD-13059"/>
<dbReference type="EMDB" id="EMD-13060"/>
<dbReference type="EMDB" id="EMD-14754"/>
<dbReference type="EMDB" id="EMD-14755"/>
<dbReference type="EMDB" id="EMD-14756"/>
<dbReference type="EMDB" id="EMD-14757"/>
<dbReference type="EMDB" id="EMD-14758"/>
<dbReference type="EMDB" id="EMD-14759"/>
<dbReference type="EMDB" id="EMD-14760"/>
<dbReference type="EMDB" id="EMD-14761"/>
<dbReference type="EMDB" id="EMD-15687"/>
<dbReference type="EMDB" id="EMD-17630"/>
<dbReference type="EMDB" id="EMD-4391"/>
<dbReference type="SMR" id="P21447"/>
<dbReference type="BioGRID" id="202140">
    <property type="interactions" value="1"/>
</dbReference>
<dbReference type="FunCoup" id="P21447">
    <property type="interactions" value="189"/>
</dbReference>
<dbReference type="STRING" id="10090.ENSMUSP00000041204"/>
<dbReference type="BindingDB" id="P21447"/>
<dbReference type="ChEMBL" id="CHEMBL2573"/>
<dbReference type="DrugCentral" id="P21447"/>
<dbReference type="GuidetoPHARMACOLOGY" id="768"/>
<dbReference type="SwissLipids" id="SLP:000000383"/>
<dbReference type="GlyCosmos" id="P21447">
    <property type="glycosylation" value="3 sites, No reported glycans"/>
</dbReference>
<dbReference type="GlyGen" id="P21447">
    <property type="glycosylation" value="6 sites, 3 N-linked glycans (3 sites), 1 O-linked glycan (1 site)"/>
</dbReference>
<dbReference type="iPTMnet" id="P21447"/>
<dbReference type="PhosphoSitePlus" id="P21447"/>
<dbReference type="jPOST" id="P21447"/>
<dbReference type="PaxDb" id="10090-ENSMUSP00000041204"/>
<dbReference type="PeptideAtlas" id="P21447"/>
<dbReference type="ProteomicsDB" id="295845"/>
<dbReference type="ABCD" id="P21447">
    <property type="antibodies" value="2 sequenced antibodies"/>
</dbReference>
<dbReference type="DNASU" id="18671"/>
<dbReference type="Ensembl" id="ENSMUST00000047753.5">
    <property type="protein sequence ID" value="ENSMUSP00000041204.5"/>
    <property type="gene ID" value="ENSMUSG00000040584.9"/>
</dbReference>
<dbReference type="GeneID" id="18671"/>
<dbReference type="KEGG" id="mmu:18671"/>
<dbReference type="UCSC" id="uc008wkl.1">
    <property type="organism name" value="mouse"/>
</dbReference>
<dbReference type="AGR" id="MGI:97570"/>
<dbReference type="CTD" id="18671"/>
<dbReference type="MGI" id="MGI:97570">
    <property type="gene designation" value="Abcb1a"/>
</dbReference>
<dbReference type="VEuPathDB" id="HostDB:ENSMUSG00000040584"/>
<dbReference type="eggNOG" id="KOG0055">
    <property type="taxonomic scope" value="Eukaryota"/>
</dbReference>
<dbReference type="GeneTree" id="ENSGT00940000155287"/>
<dbReference type="HOGENOM" id="CLU_000604_17_2_1"/>
<dbReference type="InParanoid" id="P21447"/>
<dbReference type="OMA" id="IGMAAPY"/>
<dbReference type="OrthoDB" id="6500128at2759"/>
<dbReference type="PhylomeDB" id="P21447"/>
<dbReference type="TreeFam" id="TF105193"/>
<dbReference type="BRENDA" id="7.6.2.2">
    <property type="organism ID" value="3474"/>
</dbReference>
<dbReference type="Reactome" id="R-MMU-382556">
    <property type="pathway name" value="ABC-family proteins mediated transport"/>
</dbReference>
<dbReference type="Reactome" id="R-MMU-9754706">
    <property type="pathway name" value="Atorvastatin ADME"/>
</dbReference>
<dbReference type="Reactome" id="R-MMU-9757110">
    <property type="pathway name" value="Prednisone ADME"/>
</dbReference>
<dbReference type="BioGRID-ORCS" id="18671">
    <property type="hits" value="4 hits in 77 CRISPR screens"/>
</dbReference>
<dbReference type="EvolutionaryTrace" id="P21447"/>
<dbReference type="PRO" id="PR:P21447"/>
<dbReference type="Proteomes" id="UP000000589">
    <property type="component" value="Chromosome 5"/>
</dbReference>
<dbReference type="RNAct" id="P21447">
    <property type="molecule type" value="protein"/>
</dbReference>
<dbReference type="Bgee" id="ENSMUSG00000040584">
    <property type="expression patterns" value="Expressed in right colon and 205 other cell types or tissues"/>
</dbReference>
<dbReference type="GO" id="GO:0016324">
    <property type="term" value="C:apical plasma membrane"/>
    <property type="evidence" value="ECO:0000314"/>
    <property type="project" value="BHF-UCL"/>
</dbReference>
<dbReference type="GO" id="GO:0031526">
    <property type="term" value="C:brush border membrane"/>
    <property type="evidence" value="ECO:0007669"/>
    <property type="project" value="Ensembl"/>
</dbReference>
<dbReference type="GO" id="GO:0005737">
    <property type="term" value="C:cytoplasm"/>
    <property type="evidence" value="ECO:0000250"/>
    <property type="project" value="UniProtKB"/>
</dbReference>
<dbReference type="GO" id="GO:0046581">
    <property type="term" value="C:intercellular canaliculus"/>
    <property type="evidence" value="ECO:0000314"/>
    <property type="project" value="MGI"/>
</dbReference>
<dbReference type="GO" id="GO:0005886">
    <property type="term" value="C:plasma membrane"/>
    <property type="evidence" value="ECO:0000304"/>
    <property type="project" value="Reactome"/>
</dbReference>
<dbReference type="GO" id="GO:0008559">
    <property type="term" value="F:ABC-type xenobiotic transporter activity"/>
    <property type="evidence" value="ECO:0007669"/>
    <property type="project" value="UniProtKB-EC"/>
</dbReference>
<dbReference type="GO" id="GO:0005524">
    <property type="term" value="F:ATP binding"/>
    <property type="evidence" value="ECO:0007669"/>
    <property type="project" value="UniProtKB-KW"/>
</dbReference>
<dbReference type="GO" id="GO:0016887">
    <property type="term" value="F:ATP hydrolysis activity"/>
    <property type="evidence" value="ECO:0000314"/>
    <property type="project" value="MGI"/>
</dbReference>
<dbReference type="GO" id="GO:0042626">
    <property type="term" value="F:ATPase-coupled transmembrane transporter activity"/>
    <property type="evidence" value="ECO:0000269"/>
    <property type="project" value="Reactome"/>
</dbReference>
<dbReference type="GO" id="GO:0099038">
    <property type="term" value="F:ceramide floppase activity"/>
    <property type="evidence" value="ECO:0000314"/>
    <property type="project" value="BHF-UCL"/>
</dbReference>
<dbReference type="GO" id="GO:0015562">
    <property type="term" value="F:efflux transmembrane transporter activity"/>
    <property type="evidence" value="ECO:0000315"/>
    <property type="project" value="ARUK-UCL"/>
</dbReference>
<dbReference type="GO" id="GO:0140328">
    <property type="term" value="F:floppase activity"/>
    <property type="evidence" value="ECO:0000315"/>
    <property type="project" value="UniProtKB"/>
</dbReference>
<dbReference type="GO" id="GO:0090554">
    <property type="term" value="F:phosphatidylcholine floppase activity"/>
    <property type="evidence" value="ECO:0000314"/>
    <property type="project" value="BHF-UCL"/>
</dbReference>
<dbReference type="GO" id="GO:0090555">
    <property type="term" value="F:phosphatidylethanolamine flippase activity"/>
    <property type="evidence" value="ECO:0000314"/>
    <property type="project" value="BHF-UCL"/>
</dbReference>
<dbReference type="GO" id="GO:0022857">
    <property type="term" value="F:transmembrane transporter activity"/>
    <property type="evidence" value="ECO:0000315"/>
    <property type="project" value="ARUK-UCL"/>
</dbReference>
<dbReference type="GO" id="GO:0042910">
    <property type="term" value="F:xenobiotic transmembrane transporter activity"/>
    <property type="evidence" value="ECO:0000315"/>
    <property type="project" value="ARUK-UCL"/>
</dbReference>
<dbReference type="GO" id="GO:0071475">
    <property type="term" value="P:cellular hyperosmotic salinity response"/>
    <property type="evidence" value="ECO:0007669"/>
    <property type="project" value="Ensembl"/>
</dbReference>
<dbReference type="GO" id="GO:0071312">
    <property type="term" value="P:cellular response to alkaloid"/>
    <property type="evidence" value="ECO:0007669"/>
    <property type="project" value="Ensembl"/>
</dbReference>
<dbReference type="GO" id="GO:0071236">
    <property type="term" value="P:cellular response to antibiotic"/>
    <property type="evidence" value="ECO:0007669"/>
    <property type="project" value="Ensembl"/>
</dbReference>
<dbReference type="GO" id="GO:1905231">
    <property type="term" value="P:cellular response to borneol"/>
    <property type="evidence" value="ECO:0007669"/>
    <property type="project" value="Ensembl"/>
</dbReference>
<dbReference type="GO" id="GO:0071549">
    <property type="term" value="P:cellular response to dexamethasone stimulus"/>
    <property type="evidence" value="ECO:0007669"/>
    <property type="project" value="Ensembl"/>
</dbReference>
<dbReference type="GO" id="GO:0071392">
    <property type="term" value="P:cellular response to estradiol stimulus"/>
    <property type="evidence" value="ECO:0007669"/>
    <property type="project" value="Ensembl"/>
</dbReference>
<dbReference type="GO" id="GO:0071217">
    <property type="term" value="P:cellular response to external biotic stimulus"/>
    <property type="evidence" value="ECO:0007669"/>
    <property type="project" value="Ensembl"/>
</dbReference>
<dbReference type="GO" id="GO:1905232">
    <property type="term" value="P:cellular response to L-glutamate"/>
    <property type="evidence" value="ECO:0007669"/>
    <property type="project" value="Ensembl"/>
</dbReference>
<dbReference type="GO" id="GO:0071222">
    <property type="term" value="P:cellular response to lipopolysaccharide"/>
    <property type="evidence" value="ECO:0007669"/>
    <property type="project" value="Ensembl"/>
</dbReference>
<dbReference type="GO" id="GO:0036146">
    <property type="term" value="P:cellular response to mycotoxin"/>
    <property type="evidence" value="ECO:0007669"/>
    <property type="project" value="Ensembl"/>
</dbReference>
<dbReference type="GO" id="GO:1904148">
    <property type="term" value="P:cellular response to nonylphenol"/>
    <property type="evidence" value="ECO:0007669"/>
    <property type="project" value="Ensembl"/>
</dbReference>
<dbReference type="GO" id="GO:0071356">
    <property type="term" value="P:cellular response to tumor necrosis factor"/>
    <property type="evidence" value="ECO:0007669"/>
    <property type="project" value="Ensembl"/>
</dbReference>
<dbReference type="GO" id="GO:0099040">
    <property type="term" value="P:ceramide translocation"/>
    <property type="evidence" value="ECO:0000314"/>
    <property type="project" value="BHF-UCL"/>
</dbReference>
<dbReference type="GO" id="GO:0007623">
    <property type="term" value="P:circadian rhythm"/>
    <property type="evidence" value="ECO:0007669"/>
    <property type="project" value="Ensembl"/>
</dbReference>
<dbReference type="GO" id="GO:0043215">
    <property type="term" value="P:daunorubicin transport"/>
    <property type="evidence" value="ECO:0007669"/>
    <property type="project" value="Ensembl"/>
</dbReference>
<dbReference type="GO" id="GO:0060856">
    <property type="term" value="P:establishment of blood-brain barrier"/>
    <property type="evidence" value="ECO:0007669"/>
    <property type="project" value="Ensembl"/>
</dbReference>
<dbReference type="GO" id="GO:1990963">
    <property type="term" value="P:establishment of blood-retinal barrier"/>
    <property type="evidence" value="ECO:0007669"/>
    <property type="project" value="Ensembl"/>
</dbReference>
<dbReference type="GO" id="GO:0140115">
    <property type="term" value="P:export across plasma membrane"/>
    <property type="evidence" value="ECO:0000315"/>
    <property type="project" value="ARUK-UCL"/>
</dbReference>
<dbReference type="GO" id="GO:0007565">
    <property type="term" value="P:female pregnancy"/>
    <property type="evidence" value="ECO:0007669"/>
    <property type="project" value="Ensembl"/>
</dbReference>
<dbReference type="GO" id="GO:0009914">
    <property type="term" value="P:hormone transport"/>
    <property type="evidence" value="ECO:0007669"/>
    <property type="project" value="Ensembl"/>
</dbReference>
<dbReference type="GO" id="GO:0050892">
    <property type="term" value="P:intestinal absorption"/>
    <property type="evidence" value="ECO:0007669"/>
    <property type="project" value="Ensembl"/>
</dbReference>
<dbReference type="GO" id="GO:0007595">
    <property type="term" value="P:lactation"/>
    <property type="evidence" value="ECO:0007669"/>
    <property type="project" value="Ensembl"/>
</dbReference>
<dbReference type="GO" id="GO:0035633">
    <property type="term" value="P:maintenance of blood-brain barrier"/>
    <property type="evidence" value="ECO:0007669"/>
    <property type="project" value="Ensembl"/>
</dbReference>
<dbReference type="GO" id="GO:1904057">
    <property type="term" value="P:negative regulation of sensory perception of pain"/>
    <property type="evidence" value="ECO:0007669"/>
    <property type="project" value="Ensembl"/>
</dbReference>
<dbReference type="GO" id="GO:0045332">
    <property type="term" value="P:phospholipid translocation"/>
    <property type="evidence" value="ECO:0000314"/>
    <property type="project" value="BHF-UCL"/>
</dbReference>
<dbReference type="GO" id="GO:0001890">
    <property type="term" value="P:placenta development"/>
    <property type="evidence" value="ECO:0007669"/>
    <property type="project" value="Ensembl"/>
</dbReference>
<dbReference type="GO" id="GO:1904446">
    <property type="term" value="P:positive regulation of establishment of Sertoli cell barrier"/>
    <property type="evidence" value="ECO:0007669"/>
    <property type="project" value="Ensembl"/>
</dbReference>
<dbReference type="GO" id="GO:2001025">
    <property type="term" value="P:positive regulation of response to drug"/>
    <property type="evidence" value="ECO:0007669"/>
    <property type="project" value="Ensembl"/>
</dbReference>
<dbReference type="GO" id="GO:1902396">
    <property type="term" value="P:protein localization to bicellular tight junction"/>
    <property type="evidence" value="ECO:0007669"/>
    <property type="project" value="Ensembl"/>
</dbReference>
<dbReference type="GO" id="GO:1904478">
    <property type="term" value="P:regulation of intestinal absorption"/>
    <property type="evidence" value="ECO:0007669"/>
    <property type="project" value="Ensembl"/>
</dbReference>
<dbReference type="GO" id="GO:0097305">
    <property type="term" value="P:response to alcohol"/>
    <property type="evidence" value="ECO:0007669"/>
    <property type="project" value="Ensembl"/>
</dbReference>
<dbReference type="GO" id="GO:0097327">
    <property type="term" value="P:response to antineoplastic agent"/>
    <property type="evidence" value="ECO:0007669"/>
    <property type="project" value="Ensembl"/>
</dbReference>
<dbReference type="GO" id="GO:0046686">
    <property type="term" value="P:response to cadmium ion"/>
    <property type="evidence" value="ECO:0007669"/>
    <property type="project" value="Ensembl"/>
</dbReference>
<dbReference type="GO" id="GO:1905233">
    <property type="term" value="P:response to codeine"/>
    <property type="evidence" value="ECO:0007669"/>
    <property type="project" value="Ensembl"/>
</dbReference>
<dbReference type="GO" id="GO:1905237">
    <property type="term" value="P:response to cyclosporin A"/>
    <property type="evidence" value="ECO:0007669"/>
    <property type="project" value="Ensembl"/>
</dbReference>
<dbReference type="GO" id="GO:0033762">
    <property type="term" value="P:response to glucagon"/>
    <property type="evidence" value="ECO:0007669"/>
    <property type="project" value="Ensembl"/>
</dbReference>
<dbReference type="GO" id="GO:1903416">
    <property type="term" value="P:response to glycoside"/>
    <property type="evidence" value="ECO:0007669"/>
    <property type="project" value="Ensembl"/>
</dbReference>
<dbReference type="GO" id="GO:0001666">
    <property type="term" value="P:response to hypoxia"/>
    <property type="evidence" value="ECO:0007669"/>
    <property type="project" value="Ensembl"/>
</dbReference>
<dbReference type="GO" id="GO:0032570">
    <property type="term" value="P:response to progesterone"/>
    <property type="evidence" value="ECO:0007669"/>
    <property type="project" value="Ensembl"/>
</dbReference>
<dbReference type="GO" id="GO:1905235">
    <property type="term" value="P:response to quercetin"/>
    <property type="evidence" value="ECO:0007669"/>
    <property type="project" value="Ensembl"/>
</dbReference>
<dbReference type="GO" id="GO:0097068">
    <property type="term" value="P:response to thyroxine"/>
    <property type="evidence" value="ECO:0007669"/>
    <property type="project" value="Ensembl"/>
</dbReference>
<dbReference type="GO" id="GO:0033189">
    <property type="term" value="P:response to vitamin A"/>
    <property type="evidence" value="ECO:0007669"/>
    <property type="project" value="Ensembl"/>
</dbReference>
<dbReference type="GO" id="GO:0033280">
    <property type="term" value="P:response to vitamin D"/>
    <property type="evidence" value="ECO:0007669"/>
    <property type="project" value="Ensembl"/>
</dbReference>
<dbReference type="GO" id="GO:0009410">
    <property type="term" value="P:response to xenobiotic stimulus"/>
    <property type="evidence" value="ECO:0007669"/>
    <property type="project" value="Ensembl"/>
</dbReference>
<dbReference type="GO" id="GO:0046865">
    <property type="term" value="P:terpenoid transport"/>
    <property type="evidence" value="ECO:0000315"/>
    <property type="project" value="ARUK-UCL"/>
</dbReference>
<dbReference type="GO" id="GO:1990961">
    <property type="term" value="P:xenobiotic detoxification by transmembrane export across the plasma membrane"/>
    <property type="evidence" value="ECO:0000314"/>
    <property type="project" value="MGI"/>
</dbReference>
<dbReference type="GO" id="GO:1990962">
    <property type="term" value="P:xenobiotic transport across blood-brain barrier"/>
    <property type="evidence" value="ECO:0000315"/>
    <property type="project" value="ARUK-UCL"/>
</dbReference>
<dbReference type="CDD" id="cd18558">
    <property type="entry name" value="ABC_6TM_Pgp_ABCB1"/>
    <property type="match status" value="2"/>
</dbReference>
<dbReference type="CDD" id="cd03249">
    <property type="entry name" value="ABC_MTABC3_MDL1_MDL2"/>
    <property type="match status" value="2"/>
</dbReference>
<dbReference type="DisProt" id="DP02756"/>
<dbReference type="FunFam" id="1.20.1560.10:FF:000043">
    <property type="entry name" value="Multidrug resistance protein 1A"/>
    <property type="match status" value="2"/>
</dbReference>
<dbReference type="FunFam" id="3.40.50.300:FF:000479">
    <property type="entry name" value="Multidrug resistance protein 1A"/>
    <property type="match status" value="2"/>
</dbReference>
<dbReference type="Gene3D" id="1.20.1560.10">
    <property type="entry name" value="ABC transporter type 1, transmembrane domain"/>
    <property type="match status" value="1"/>
</dbReference>
<dbReference type="Gene3D" id="3.40.50.300">
    <property type="entry name" value="P-loop containing nucleotide triphosphate hydrolases"/>
    <property type="match status" value="2"/>
</dbReference>
<dbReference type="InterPro" id="IPR003593">
    <property type="entry name" value="AAA+_ATPase"/>
</dbReference>
<dbReference type="InterPro" id="IPR011527">
    <property type="entry name" value="ABC1_TM_dom"/>
</dbReference>
<dbReference type="InterPro" id="IPR036640">
    <property type="entry name" value="ABC1_TM_sf"/>
</dbReference>
<dbReference type="InterPro" id="IPR003439">
    <property type="entry name" value="ABC_transporter-like_ATP-bd"/>
</dbReference>
<dbReference type="InterPro" id="IPR017871">
    <property type="entry name" value="ABC_transporter-like_CS"/>
</dbReference>
<dbReference type="InterPro" id="IPR027417">
    <property type="entry name" value="P-loop_NTPase"/>
</dbReference>
<dbReference type="InterPro" id="IPR039421">
    <property type="entry name" value="Type_1_exporter"/>
</dbReference>
<dbReference type="PANTHER" id="PTHR43394:SF28">
    <property type="entry name" value="ATP-BINDING CASSETTE SUBFAMILY B MEMBER 1"/>
    <property type="match status" value="1"/>
</dbReference>
<dbReference type="PANTHER" id="PTHR43394">
    <property type="entry name" value="ATP-DEPENDENT PERMEASE MDL1, MITOCHONDRIAL"/>
    <property type="match status" value="1"/>
</dbReference>
<dbReference type="Pfam" id="PF00664">
    <property type="entry name" value="ABC_membrane"/>
    <property type="match status" value="2"/>
</dbReference>
<dbReference type="Pfam" id="PF00005">
    <property type="entry name" value="ABC_tran"/>
    <property type="match status" value="2"/>
</dbReference>
<dbReference type="SMART" id="SM00382">
    <property type="entry name" value="AAA"/>
    <property type="match status" value="2"/>
</dbReference>
<dbReference type="SUPFAM" id="SSF90123">
    <property type="entry name" value="ABC transporter transmembrane region"/>
    <property type="match status" value="2"/>
</dbReference>
<dbReference type="SUPFAM" id="SSF52540">
    <property type="entry name" value="P-loop containing nucleoside triphosphate hydrolases"/>
    <property type="match status" value="2"/>
</dbReference>
<dbReference type="PROSITE" id="PS50929">
    <property type="entry name" value="ABC_TM1F"/>
    <property type="match status" value="2"/>
</dbReference>
<dbReference type="PROSITE" id="PS00211">
    <property type="entry name" value="ABC_TRANSPORTER_1"/>
    <property type="match status" value="2"/>
</dbReference>
<dbReference type="PROSITE" id="PS50893">
    <property type="entry name" value="ABC_TRANSPORTER_2"/>
    <property type="match status" value="2"/>
</dbReference>
<protein>
    <recommendedName>
        <fullName evidence="3">ATP-dependent translocase ABCB1</fullName>
    </recommendedName>
    <alternativeName>
        <fullName evidence="9">ATP-binding cassette sub-family B member 1A</fullName>
    </alternativeName>
    <alternativeName>
        <fullName>MDR1A</fullName>
    </alternativeName>
    <alternativeName>
        <fullName>Multidrug resistance protein 1A</fullName>
        <ecNumber evidence="3">7.6.2.2</ecNumber>
    </alternativeName>
    <alternativeName>
        <fullName>Multidrug resistance protein 3</fullName>
    </alternativeName>
    <alternativeName>
        <fullName>P-glycoprotein 3</fullName>
    </alternativeName>
    <alternativeName>
        <fullName evidence="9">Phospholipid transporter ABCB1</fullName>
        <ecNumber evidence="3">7.6.2.1</ecNumber>
    </alternativeName>
</protein>
<comment type="function">
    <text evidence="3 8">Translocates drugs and phospholipids across the membrane. Catalyzes the flop of phospholipids from the cytoplasmic to the exoplasmic leaflet of the apical membrane. Participates mainly to the flop of phosphatidylcholine, phosphatidylethanolamine, beta-D-glucosylceramides and sphingomyelins (PubMed:8898203). Energy-dependent efflux pump responsible for decreased drug accumulation in multidrug-resistant cells (By similarity).</text>
</comment>
<comment type="catalytic activity">
    <reaction evidence="3">
        <text>ATP + H2O + xenobioticSide 1 = ADP + phosphate + xenobioticSide 2.</text>
        <dbReference type="EC" id="7.6.2.2"/>
    </reaction>
</comment>
<comment type="catalytic activity">
    <reaction evidence="8">
        <text>ATP + H2O + phospholipidSide 1 = ADP + phosphate + phospholipidSide 2.</text>
        <dbReference type="EC" id="7.6.2.1"/>
    </reaction>
</comment>
<comment type="catalytic activity">
    <reaction evidence="8">
        <text>a 1,2-diacyl-sn-glycero-3-phosphoethanolamine(in) + ATP + H2O = a 1,2-diacyl-sn-glycero-3-phosphoethanolamine(out) + ADP + phosphate + H(+)</text>
        <dbReference type="Rhea" id="RHEA:36439"/>
        <dbReference type="ChEBI" id="CHEBI:15377"/>
        <dbReference type="ChEBI" id="CHEBI:15378"/>
        <dbReference type="ChEBI" id="CHEBI:30616"/>
        <dbReference type="ChEBI" id="CHEBI:43474"/>
        <dbReference type="ChEBI" id="CHEBI:64612"/>
        <dbReference type="ChEBI" id="CHEBI:456216"/>
    </reaction>
</comment>
<comment type="catalytic activity">
    <reaction evidence="8">
        <text>a 1,2-diacyl-sn-glycero-3-phosphocholine(out) + ATP + H2O = a 1,2-diacyl-sn-glycero-3-phosphocholine(in) + ADP + phosphate + H(+)</text>
        <dbReference type="Rhea" id="RHEA:38583"/>
        <dbReference type="ChEBI" id="CHEBI:15377"/>
        <dbReference type="ChEBI" id="CHEBI:15378"/>
        <dbReference type="ChEBI" id="CHEBI:30616"/>
        <dbReference type="ChEBI" id="CHEBI:43474"/>
        <dbReference type="ChEBI" id="CHEBI:57643"/>
        <dbReference type="ChEBI" id="CHEBI:456216"/>
    </reaction>
</comment>
<comment type="catalytic activity">
    <reaction evidence="8">
        <text>a beta-D-glucosyl-(1&lt;-&gt;1')-N-acylsphing-4-enine(in) + ATP + H2O = a beta-D-glucosyl-(1&lt;-&gt;1')-N-acylsphing-4-enine(out) + ADP + phosphate + H(+)</text>
        <dbReference type="Rhea" id="RHEA:38943"/>
        <dbReference type="ChEBI" id="CHEBI:15377"/>
        <dbReference type="ChEBI" id="CHEBI:15378"/>
        <dbReference type="ChEBI" id="CHEBI:22801"/>
        <dbReference type="ChEBI" id="CHEBI:30616"/>
        <dbReference type="ChEBI" id="CHEBI:43474"/>
        <dbReference type="ChEBI" id="CHEBI:456216"/>
    </reaction>
</comment>
<comment type="catalytic activity">
    <reaction evidence="8">
        <text>a sphingomyelin(in) + ATP + H2O = a sphingomyelin(out) + ADP + phosphate + H(+)</text>
        <dbReference type="Rhea" id="RHEA:38903"/>
        <dbReference type="ChEBI" id="CHEBI:15377"/>
        <dbReference type="ChEBI" id="CHEBI:15378"/>
        <dbReference type="ChEBI" id="CHEBI:17636"/>
        <dbReference type="ChEBI" id="CHEBI:30616"/>
        <dbReference type="ChEBI" id="CHEBI:43474"/>
        <dbReference type="ChEBI" id="CHEBI:456216"/>
    </reaction>
</comment>
<comment type="activity regulation">
    <text evidence="3">Translocase activity is inhibited by verapamil and is sensitive to energy depletion. C1orf115 regulates drug efflux through modulation of ABCB1 localization and activity.</text>
</comment>
<comment type="subunit">
    <text evidence="1">Interacts with PSMB5.</text>
</comment>
<comment type="subcellular location">
    <subcellularLocation>
        <location evidence="3">Cell membrane</location>
        <topology evidence="6">Multi-pass membrane protein</topology>
    </subcellularLocation>
    <subcellularLocation>
        <location evidence="8">Apical cell membrane</location>
    </subcellularLocation>
    <subcellularLocation>
        <location evidence="3">Cytoplasm</location>
    </subcellularLocation>
    <text evidence="3">ABCB1 localization is influenced by C1orf115 expression levels (plasma membrane versus cytoplasm).</text>
</comment>
<comment type="miscellaneous">
    <text>In mouse the MDR gene family includes three or more related but distinct cellular genes.</text>
</comment>
<comment type="similarity">
    <text evidence="9">Belongs to the ABC transporter superfamily. ABCB family. Multidrug resistance exporter (TC 3.A.1.201) subfamily.</text>
</comment>
<proteinExistence type="evidence at protein level"/>
<feature type="chain" id="PRO_0000093336" description="ATP-dependent translocase ABCB1">
    <location>
        <begin position="1"/>
        <end position="1276"/>
    </location>
</feature>
<feature type="topological domain" description="Cytoplasmic" evidence="1">
    <location>
        <begin position="1"/>
        <end position="43"/>
    </location>
</feature>
<feature type="transmembrane region" description="Helical">
    <location>
        <begin position="44"/>
        <end position="66"/>
    </location>
</feature>
<feature type="topological domain" description="Extracellular" evidence="1">
    <location>
        <begin position="67"/>
        <end position="112"/>
    </location>
</feature>
<feature type="transmembrane region" description="Helical">
    <location>
        <begin position="113"/>
        <end position="133"/>
    </location>
</feature>
<feature type="topological domain" description="Cytoplasmic" evidence="1">
    <location>
        <begin position="134"/>
        <end position="182"/>
    </location>
</feature>
<feature type="transmembrane region" description="Helical">
    <location>
        <begin position="183"/>
        <end position="204"/>
    </location>
</feature>
<feature type="topological domain" description="Extracellular" evidence="1">
    <location>
        <begin position="205"/>
        <end position="211"/>
    </location>
</feature>
<feature type="transmembrane region" description="Helical">
    <location>
        <begin position="212"/>
        <end position="232"/>
    </location>
</feature>
<feature type="topological domain" description="Cytoplasmic" evidence="1">
    <location>
        <begin position="233"/>
        <end position="290"/>
    </location>
</feature>
<feature type="transmembrane region" description="Helical">
    <location>
        <begin position="291"/>
        <end position="312"/>
    </location>
</feature>
<feature type="topological domain" description="Extracellular" evidence="1">
    <location>
        <begin position="313"/>
        <end position="326"/>
    </location>
</feature>
<feature type="transmembrane region" description="Helical">
    <location>
        <begin position="327"/>
        <end position="348"/>
    </location>
</feature>
<feature type="topological domain" description="Cytoplasmic" evidence="1">
    <location>
        <begin position="349"/>
        <end position="707"/>
    </location>
</feature>
<feature type="transmembrane region" description="Helical">
    <location>
        <begin position="708"/>
        <end position="728"/>
    </location>
</feature>
<feature type="topological domain" description="Extracellular" evidence="1">
    <location>
        <begin position="729"/>
        <end position="752"/>
    </location>
</feature>
<feature type="transmembrane region" description="Helical">
    <location>
        <begin position="753"/>
        <end position="773"/>
    </location>
</feature>
<feature type="topological domain" description="Cytoplasmic" evidence="1">
    <location>
        <begin position="774"/>
        <end position="828"/>
    </location>
</feature>
<feature type="transmembrane region" description="Helical">
    <location>
        <begin position="829"/>
        <end position="849"/>
    </location>
</feature>
<feature type="topological domain" description="Extracellular" evidence="1">
    <location>
        <position position="850"/>
    </location>
</feature>
<feature type="transmembrane region" description="Helical">
    <location>
        <begin position="851"/>
        <end position="870"/>
    </location>
</feature>
<feature type="topological domain" description="Cytoplasmic" evidence="1">
    <location>
        <begin position="871"/>
        <end position="930"/>
    </location>
</feature>
<feature type="transmembrane region" description="Helical">
    <location>
        <begin position="931"/>
        <end position="953"/>
    </location>
</feature>
<feature type="topological domain" description="Extracellular" evidence="1">
    <location>
        <begin position="954"/>
        <end position="969"/>
    </location>
</feature>
<feature type="transmembrane region" description="Helical">
    <location>
        <begin position="970"/>
        <end position="991"/>
    </location>
</feature>
<feature type="topological domain" description="Cytoplasmic" evidence="1">
    <location>
        <begin position="992"/>
        <end position="1276"/>
    </location>
</feature>
<feature type="domain" description="ABC transmembrane type-1 1" evidence="6">
    <location>
        <begin position="50"/>
        <end position="353"/>
    </location>
</feature>
<feature type="domain" description="ABC transporter 1" evidence="5">
    <location>
        <begin position="388"/>
        <end position="624"/>
    </location>
</feature>
<feature type="domain" description="ABC transmembrane type-1 2" evidence="6">
    <location>
        <begin position="707"/>
        <end position="996"/>
    </location>
</feature>
<feature type="domain" description="ABC transporter 2" evidence="5">
    <location>
        <begin position="1031"/>
        <end position="1269"/>
    </location>
</feature>
<feature type="region of interest" description="Disordered" evidence="7">
    <location>
        <begin position="1"/>
        <end position="26"/>
    </location>
</feature>
<feature type="region of interest" description="Disordered" evidence="7">
    <location>
        <begin position="646"/>
        <end position="681"/>
    </location>
</feature>
<feature type="compositionally biased region" description="Basic and acidic residues" evidence="7">
    <location>
        <begin position="1"/>
        <end position="15"/>
    </location>
</feature>
<feature type="compositionally biased region" description="Polar residues" evidence="7">
    <location>
        <begin position="648"/>
        <end position="657"/>
    </location>
</feature>
<feature type="compositionally biased region" description="Basic and acidic residues" evidence="7">
    <location>
        <begin position="672"/>
        <end position="681"/>
    </location>
</feature>
<feature type="binding site" evidence="5">
    <location>
        <begin position="423"/>
        <end position="430"/>
    </location>
    <ligand>
        <name>ATP</name>
        <dbReference type="ChEBI" id="CHEBI:30616"/>
        <label>1</label>
    </ligand>
</feature>
<feature type="binding site" evidence="5">
    <location>
        <begin position="1066"/>
        <end position="1073"/>
    </location>
    <ligand>
        <name>ATP</name>
        <dbReference type="ChEBI" id="CHEBI:30616"/>
        <label>2</label>
    </ligand>
</feature>
<feature type="modified residue" description="Phosphoserine" evidence="2">
    <location>
        <position position="656"/>
    </location>
</feature>
<feature type="glycosylation site" description="N-linked (GlcNAc...) asparagine" evidence="4">
    <location>
        <position position="83"/>
    </location>
</feature>
<feature type="glycosylation site" description="N-linked (GlcNAc...) asparagine" evidence="4">
    <location>
        <position position="87"/>
    </location>
</feature>
<feature type="glycosylation site" description="N-linked (GlcNAc...) asparagine" evidence="4">
    <location>
        <position position="90"/>
    </location>
</feature>
<feature type="sequence conflict" description="In Ref. 2; AAA39514 and 5; AAA03243." evidence="9" ref="2 5">
    <original>QL</original>
    <variation>HV</variation>
    <location>
        <begin position="526"/>
        <end position="527"/>
    </location>
</feature>
<feature type="sequence conflict" description="In Ref. 1; AAA39517." evidence="9" ref="1">
    <original>S</original>
    <variation>F</variation>
    <location>
        <position position="939"/>
    </location>
</feature>
<feature type="sequence conflict" description="In Ref. 1; AAA39517." evidence="9" ref="1">
    <original>V</original>
    <variation>F</variation>
    <location>
        <position position="1036"/>
    </location>
</feature>
<feature type="helix" evidence="14">
    <location>
        <begin position="35"/>
        <end position="37"/>
    </location>
</feature>
<feature type="turn" evidence="18">
    <location>
        <begin position="38"/>
        <end position="41"/>
    </location>
</feature>
<feature type="helix" evidence="13">
    <location>
        <begin position="43"/>
        <end position="68"/>
    </location>
</feature>
<feature type="turn" evidence="13">
    <location>
        <begin position="69"/>
        <end position="74"/>
    </location>
</feature>
<feature type="helix" evidence="13">
    <location>
        <begin position="75"/>
        <end position="82"/>
    </location>
</feature>
<feature type="helix" evidence="12">
    <location>
        <begin position="84"/>
        <end position="87"/>
    </location>
</feature>
<feature type="strand" evidence="18">
    <location>
        <begin position="88"/>
        <end position="91"/>
    </location>
</feature>
<feature type="helix" evidence="13">
    <location>
        <begin position="92"/>
        <end position="153"/>
    </location>
</feature>
<feature type="helix" evidence="13">
    <location>
        <begin position="156"/>
        <end position="161"/>
    </location>
</feature>
<feature type="helix" evidence="13">
    <location>
        <begin position="164"/>
        <end position="166"/>
    </location>
</feature>
<feature type="helix" evidence="13">
    <location>
        <begin position="167"/>
        <end position="179"/>
    </location>
</feature>
<feature type="turn" evidence="12">
    <location>
        <begin position="181"/>
        <end position="183"/>
    </location>
</feature>
<feature type="helix" evidence="13">
    <location>
        <begin position="184"/>
        <end position="207"/>
    </location>
</feature>
<feature type="helix" evidence="13">
    <location>
        <begin position="210"/>
        <end position="215"/>
    </location>
</feature>
<feature type="helix" evidence="13">
    <location>
        <begin position="218"/>
        <end position="255"/>
    </location>
</feature>
<feature type="helix" evidence="13">
    <location>
        <begin position="257"/>
        <end position="262"/>
    </location>
</feature>
<feature type="turn" evidence="11">
    <location>
        <begin position="263"/>
        <end position="265"/>
    </location>
</feature>
<feature type="helix" evidence="13">
    <location>
        <begin position="266"/>
        <end position="318"/>
    </location>
</feature>
<feature type="helix" evidence="13">
    <location>
        <begin position="324"/>
        <end position="343"/>
    </location>
</feature>
<feature type="helix" evidence="13">
    <location>
        <begin position="345"/>
        <end position="366"/>
    </location>
</feature>
<feature type="strand" evidence="13">
    <location>
        <begin position="388"/>
        <end position="395"/>
    </location>
</feature>
<feature type="helix" evidence="13">
    <location>
        <begin position="398"/>
        <end position="400"/>
    </location>
</feature>
<feature type="strand" evidence="16">
    <location>
        <begin position="401"/>
        <end position="403"/>
    </location>
</feature>
<feature type="strand" evidence="13">
    <location>
        <begin position="406"/>
        <end position="413"/>
    </location>
</feature>
<feature type="strand" evidence="13">
    <location>
        <begin position="418"/>
        <end position="423"/>
    </location>
</feature>
<feature type="helix" evidence="13">
    <location>
        <begin position="429"/>
        <end position="436"/>
    </location>
</feature>
<feature type="strand" evidence="13">
    <location>
        <begin position="443"/>
        <end position="449"/>
    </location>
</feature>
<feature type="helix" evidence="17">
    <location>
        <begin position="454"/>
        <end position="456"/>
    </location>
</feature>
<feature type="helix" evidence="13">
    <location>
        <begin position="459"/>
        <end position="464"/>
    </location>
</feature>
<feature type="strand" evidence="13">
    <location>
        <begin position="466"/>
        <end position="469"/>
    </location>
</feature>
<feature type="strand" evidence="13">
    <location>
        <begin position="477"/>
        <end position="479"/>
    </location>
</feature>
<feature type="helix" evidence="13">
    <location>
        <begin position="480"/>
        <end position="485"/>
    </location>
</feature>
<feature type="helix" evidence="13">
    <location>
        <begin position="493"/>
        <end position="502"/>
    </location>
</feature>
<feature type="helix" evidence="13">
    <location>
        <begin position="506"/>
        <end position="511"/>
    </location>
</feature>
<feature type="strand" evidence="16">
    <location>
        <begin position="512"/>
        <end position="514"/>
    </location>
</feature>
<feature type="helix" evidence="13">
    <location>
        <begin position="515"/>
        <end position="517"/>
    </location>
</feature>
<feature type="helix" evidence="13">
    <location>
        <begin position="522"/>
        <end position="524"/>
    </location>
</feature>
<feature type="helix" evidence="13">
    <location>
        <begin position="529"/>
        <end position="541"/>
    </location>
</feature>
<feature type="strand" evidence="13">
    <location>
        <begin position="546"/>
        <end position="552"/>
    </location>
</feature>
<feature type="turn" evidence="13">
    <location>
        <begin position="553"/>
        <end position="556"/>
    </location>
</feature>
<feature type="helix" evidence="13">
    <location>
        <begin position="559"/>
        <end position="571"/>
    </location>
</feature>
<feature type="turn" evidence="15">
    <location>
        <begin position="572"/>
        <end position="575"/>
    </location>
</feature>
<feature type="strand" evidence="13">
    <location>
        <begin position="576"/>
        <end position="581"/>
    </location>
</feature>
<feature type="helix" evidence="13">
    <location>
        <begin position="585"/>
        <end position="589"/>
    </location>
</feature>
<feature type="strand" evidence="13">
    <location>
        <begin position="592"/>
        <end position="598"/>
    </location>
</feature>
<feature type="strand" evidence="13">
    <location>
        <begin position="601"/>
        <end position="606"/>
    </location>
</feature>
<feature type="helix" evidence="13">
    <location>
        <begin position="608"/>
        <end position="614"/>
    </location>
</feature>
<feature type="helix" evidence="13">
    <location>
        <begin position="617"/>
        <end position="623"/>
    </location>
</feature>
<feature type="strand" evidence="16">
    <location>
        <begin position="686"/>
        <end position="688"/>
    </location>
</feature>
<feature type="helix" evidence="13">
    <location>
        <begin position="692"/>
        <end position="698"/>
    </location>
</feature>
<feature type="helix" evidence="13">
    <location>
        <begin position="699"/>
        <end position="703"/>
    </location>
</feature>
<feature type="helix" evidence="13">
    <location>
        <begin position="704"/>
        <end position="736"/>
    </location>
</feature>
<feature type="helix" evidence="13">
    <location>
        <begin position="741"/>
        <end position="794"/>
    </location>
</feature>
<feature type="helix" evidence="13">
    <location>
        <begin position="797"/>
        <end position="801"/>
    </location>
</feature>
<feature type="helix" evidence="18">
    <location>
        <begin position="803"/>
        <end position="805"/>
    </location>
</feature>
<feature type="helix" evidence="13">
    <location>
        <begin position="807"/>
        <end position="824"/>
    </location>
</feature>
<feature type="helix" evidence="13">
    <location>
        <begin position="827"/>
        <end position="849"/>
    </location>
</feature>
<feature type="strand" evidence="17">
    <location>
        <begin position="851"/>
        <end position="853"/>
    </location>
</feature>
<feature type="helix" evidence="13">
    <location>
        <begin position="854"/>
        <end position="898"/>
    </location>
</feature>
<feature type="helix" evidence="13">
    <location>
        <begin position="900"/>
        <end position="905"/>
    </location>
</feature>
<feature type="helix" evidence="13">
    <location>
        <begin position="909"/>
        <end position="918"/>
    </location>
</feature>
<feature type="helix" evidence="13">
    <location>
        <begin position="921"/>
        <end position="961"/>
    </location>
</feature>
<feature type="strand" evidence="11">
    <location>
        <begin position="962"/>
        <end position="964"/>
    </location>
</feature>
<feature type="helix" evidence="13">
    <location>
        <begin position="967"/>
        <end position="981"/>
    </location>
</feature>
<feature type="helix" evidence="13">
    <location>
        <begin position="984"/>
        <end position="989"/>
    </location>
</feature>
<feature type="helix" evidence="13">
    <location>
        <begin position="991"/>
        <end position="1008"/>
    </location>
</feature>
<feature type="strand" evidence="13">
    <location>
        <begin position="1031"/>
        <end position="1038"/>
    </location>
</feature>
<feature type="strand" evidence="13">
    <location>
        <begin position="1048"/>
        <end position="1056"/>
    </location>
</feature>
<feature type="strand" evidence="13">
    <location>
        <begin position="1061"/>
        <end position="1067"/>
    </location>
</feature>
<feature type="helix" evidence="13">
    <location>
        <begin position="1072"/>
        <end position="1079"/>
    </location>
</feature>
<feature type="strand" evidence="13">
    <location>
        <begin position="1086"/>
        <end position="1092"/>
    </location>
</feature>
<feature type="turn" evidence="13">
    <location>
        <begin position="1097"/>
        <end position="1099"/>
    </location>
</feature>
<feature type="helix" evidence="13">
    <location>
        <begin position="1102"/>
        <end position="1107"/>
    </location>
</feature>
<feature type="strand" evidence="13">
    <location>
        <begin position="1109"/>
        <end position="1112"/>
    </location>
</feature>
<feature type="strand" evidence="13">
    <location>
        <begin position="1120"/>
        <end position="1122"/>
    </location>
</feature>
<feature type="helix" evidence="13">
    <location>
        <begin position="1123"/>
        <end position="1128"/>
    </location>
</feature>
<feature type="strand" evidence="14">
    <location>
        <begin position="1132"/>
        <end position="1134"/>
    </location>
</feature>
<feature type="helix" evidence="13">
    <location>
        <begin position="1138"/>
        <end position="1147"/>
    </location>
</feature>
<feature type="helix" evidence="13">
    <location>
        <begin position="1151"/>
        <end position="1156"/>
    </location>
</feature>
<feature type="strand" evidence="12">
    <location>
        <begin position="1157"/>
        <end position="1159"/>
    </location>
</feature>
<feature type="helix" evidence="13">
    <location>
        <begin position="1160"/>
        <end position="1162"/>
    </location>
</feature>
<feature type="helix" evidence="13">
    <location>
        <begin position="1167"/>
        <end position="1169"/>
    </location>
</feature>
<feature type="helix" evidence="13">
    <location>
        <begin position="1174"/>
        <end position="1187"/>
    </location>
</feature>
<feature type="strand" evidence="13">
    <location>
        <begin position="1191"/>
        <end position="1197"/>
    </location>
</feature>
<feature type="turn" evidence="13">
    <location>
        <begin position="1198"/>
        <end position="1201"/>
    </location>
</feature>
<feature type="helix" evidence="13">
    <location>
        <begin position="1204"/>
        <end position="1216"/>
    </location>
</feature>
<feature type="turn" evidence="12">
    <location>
        <begin position="1218"/>
        <end position="1220"/>
    </location>
</feature>
<feature type="strand" evidence="13">
    <location>
        <begin position="1221"/>
        <end position="1226"/>
    </location>
</feature>
<feature type="helix" evidence="13">
    <location>
        <begin position="1230"/>
        <end position="1232"/>
    </location>
</feature>
<feature type="turn" evidence="13">
    <location>
        <begin position="1233"/>
        <end position="1235"/>
    </location>
</feature>
<feature type="strand" evidence="13">
    <location>
        <begin position="1236"/>
        <end position="1243"/>
    </location>
</feature>
<feature type="strand" evidence="13">
    <location>
        <begin position="1246"/>
        <end position="1251"/>
    </location>
</feature>
<feature type="helix" evidence="13">
    <location>
        <begin position="1253"/>
        <end position="1258"/>
    </location>
</feature>
<feature type="helix" evidence="13">
    <location>
        <begin position="1262"/>
        <end position="1268"/>
    </location>
</feature>
<accession>P21447</accession>
<accession>Q5I1Y5</accession>